<comment type="function">
    <text evidence="1">Catalyzes the synthesis of alpha-ribazole-5'-phosphate from nicotinate mononucleotide (NAMN) and 5,6-dimethylbenzimidazole (DMB).</text>
</comment>
<comment type="catalytic activity">
    <reaction evidence="1">
        <text>5,6-dimethylbenzimidazole + nicotinate beta-D-ribonucleotide = alpha-ribazole 5'-phosphate + nicotinate + H(+)</text>
        <dbReference type="Rhea" id="RHEA:11196"/>
        <dbReference type="ChEBI" id="CHEBI:15378"/>
        <dbReference type="ChEBI" id="CHEBI:15890"/>
        <dbReference type="ChEBI" id="CHEBI:32544"/>
        <dbReference type="ChEBI" id="CHEBI:57502"/>
        <dbReference type="ChEBI" id="CHEBI:57918"/>
        <dbReference type="EC" id="2.4.2.21"/>
    </reaction>
</comment>
<comment type="pathway">
    <text evidence="1">Nucleoside biosynthesis; alpha-ribazole biosynthesis; alpha-ribazole from 5,6-dimethylbenzimidazole: step 1/2.</text>
</comment>
<comment type="similarity">
    <text evidence="1">Belongs to the CobT family.</text>
</comment>
<feature type="chain" id="PRO_1000100469" description="Nicotinate-nucleotide--dimethylbenzimidazole phosphoribosyltransferase">
    <location>
        <begin position="1"/>
        <end position="353"/>
    </location>
</feature>
<feature type="active site" description="Proton acceptor" evidence="1">
    <location>
        <position position="319"/>
    </location>
</feature>
<organism>
    <name type="scientific">Prosthecochloris aestuarii (strain DSM 271 / SK 413)</name>
    <dbReference type="NCBI Taxonomy" id="290512"/>
    <lineage>
        <taxon>Bacteria</taxon>
        <taxon>Pseudomonadati</taxon>
        <taxon>Chlorobiota</taxon>
        <taxon>Chlorobiia</taxon>
        <taxon>Chlorobiales</taxon>
        <taxon>Chlorobiaceae</taxon>
        <taxon>Prosthecochloris</taxon>
    </lineage>
</organism>
<reference key="1">
    <citation type="submission" date="2008-06" db="EMBL/GenBank/DDBJ databases">
        <title>Complete sequence of chromosome of Prosthecochloris aestuarii DSM 271.</title>
        <authorList>
            <consortium name="US DOE Joint Genome Institute"/>
            <person name="Lucas S."/>
            <person name="Copeland A."/>
            <person name="Lapidus A."/>
            <person name="Glavina del Rio T."/>
            <person name="Dalin E."/>
            <person name="Tice H."/>
            <person name="Bruce D."/>
            <person name="Goodwin L."/>
            <person name="Pitluck S."/>
            <person name="Schmutz J."/>
            <person name="Larimer F."/>
            <person name="Land M."/>
            <person name="Hauser L."/>
            <person name="Kyrpides N."/>
            <person name="Anderson I."/>
            <person name="Liu Z."/>
            <person name="Li T."/>
            <person name="Zhao F."/>
            <person name="Overmann J."/>
            <person name="Bryant D.A."/>
            <person name="Richardson P."/>
        </authorList>
    </citation>
    <scope>NUCLEOTIDE SEQUENCE [LARGE SCALE GENOMIC DNA]</scope>
    <source>
        <strain>DSM 271 / SK 413</strain>
    </source>
</reference>
<name>COBT_PROA2</name>
<proteinExistence type="inferred from homology"/>
<dbReference type="EC" id="2.4.2.21" evidence="1"/>
<dbReference type="EMBL" id="CP001108">
    <property type="protein sequence ID" value="ACF46280.1"/>
    <property type="molecule type" value="Genomic_DNA"/>
</dbReference>
<dbReference type="RefSeq" id="WP_012505815.1">
    <property type="nucleotide sequence ID" value="NC_011059.1"/>
</dbReference>
<dbReference type="SMR" id="B4S893"/>
<dbReference type="STRING" id="290512.Paes_1254"/>
<dbReference type="KEGG" id="paa:Paes_1254"/>
<dbReference type="eggNOG" id="COG2038">
    <property type="taxonomic scope" value="Bacteria"/>
</dbReference>
<dbReference type="HOGENOM" id="CLU_002982_0_0_10"/>
<dbReference type="UniPathway" id="UPA00061">
    <property type="reaction ID" value="UER00516"/>
</dbReference>
<dbReference type="Proteomes" id="UP000002725">
    <property type="component" value="Chromosome"/>
</dbReference>
<dbReference type="GO" id="GO:0008939">
    <property type="term" value="F:nicotinate-nucleotide-dimethylbenzimidazole phosphoribosyltransferase activity"/>
    <property type="evidence" value="ECO:0007669"/>
    <property type="project" value="UniProtKB-UniRule"/>
</dbReference>
<dbReference type="GO" id="GO:0009236">
    <property type="term" value="P:cobalamin biosynthetic process"/>
    <property type="evidence" value="ECO:0007669"/>
    <property type="project" value="UniProtKB-KW"/>
</dbReference>
<dbReference type="CDD" id="cd02439">
    <property type="entry name" value="DMB-PRT_CobT"/>
    <property type="match status" value="1"/>
</dbReference>
<dbReference type="FunFam" id="3.40.50.10210:FF:000001">
    <property type="entry name" value="Nicotinate-nucleotide--dimethylbenzimidazole phosphoribosyltransferase"/>
    <property type="match status" value="1"/>
</dbReference>
<dbReference type="Gene3D" id="1.10.1610.10">
    <property type="match status" value="1"/>
</dbReference>
<dbReference type="Gene3D" id="3.40.50.10210">
    <property type="match status" value="1"/>
</dbReference>
<dbReference type="HAMAP" id="MF_00230">
    <property type="entry name" value="CobT"/>
    <property type="match status" value="1"/>
</dbReference>
<dbReference type="InterPro" id="IPR003200">
    <property type="entry name" value="Nict_dMeBzImd_PRibTrfase"/>
</dbReference>
<dbReference type="InterPro" id="IPR017846">
    <property type="entry name" value="Nict_dMeBzImd_PRibTrfase_bact"/>
</dbReference>
<dbReference type="InterPro" id="IPR023195">
    <property type="entry name" value="Nict_dMeBzImd_PRibTrfase_N"/>
</dbReference>
<dbReference type="InterPro" id="IPR036087">
    <property type="entry name" value="Nict_dMeBzImd_PRibTrfase_sf"/>
</dbReference>
<dbReference type="NCBIfam" id="TIGR03160">
    <property type="entry name" value="cobT_DBIPRT"/>
    <property type="match status" value="1"/>
</dbReference>
<dbReference type="NCBIfam" id="NF000996">
    <property type="entry name" value="PRK00105.1"/>
    <property type="match status" value="1"/>
</dbReference>
<dbReference type="PANTHER" id="PTHR43463">
    <property type="entry name" value="NICOTINATE-NUCLEOTIDE--DIMETHYLBENZIMIDAZOLE PHOSPHORIBOSYLTRANSFERASE"/>
    <property type="match status" value="1"/>
</dbReference>
<dbReference type="PANTHER" id="PTHR43463:SF1">
    <property type="entry name" value="NICOTINATE-NUCLEOTIDE--DIMETHYLBENZIMIDAZOLE PHOSPHORIBOSYLTRANSFERASE"/>
    <property type="match status" value="1"/>
</dbReference>
<dbReference type="Pfam" id="PF02277">
    <property type="entry name" value="DBI_PRT"/>
    <property type="match status" value="1"/>
</dbReference>
<dbReference type="SUPFAM" id="SSF52733">
    <property type="entry name" value="Nicotinate mononucleotide:5,6-dimethylbenzimidazole phosphoribosyltransferase (CobT)"/>
    <property type="match status" value="1"/>
</dbReference>
<protein>
    <recommendedName>
        <fullName evidence="1">Nicotinate-nucleotide--dimethylbenzimidazole phosphoribosyltransferase</fullName>
        <shortName evidence="1">NN:DBI PRT</shortName>
        <ecNumber evidence="1">2.4.2.21</ecNumber>
    </recommendedName>
    <alternativeName>
        <fullName evidence="1">N(1)-alpha-phosphoribosyltransferase</fullName>
    </alternativeName>
</protein>
<keyword id="KW-0169">Cobalamin biosynthesis</keyword>
<keyword id="KW-0328">Glycosyltransferase</keyword>
<keyword id="KW-0808">Transferase</keyword>
<evidence type="ECO:0000255" key="1">
    <source>
        <dbReference type="HAMAP-Rule" id="MF_00230"/>
    </source>
</evidence>
<sequence>MIEQFQQVLASVKSVDMSLTKEVQAHLDDLTKPRGSLGRLEEIAMKYVLATGSLRPELRKKKVFCFAADHGVAVEGVSAFPAEVTPQMVYNMLAGGAAINVLSRHAGADLDVVDMGVHHDFVEHPSLRICKVRHGSSNMAEGPAMTMDETLQAIMTGVSLAHEARKEGYDLLATGEMGIANTTPATALYASMLDLPVEMITGRGTGIDDAVLQHKISVIKRALDVNSASLSTPLEQLAALGGFEIAGICGLILGAASVGMPVVVDGFISSAGAVAALKLSCRVSDYLFFSHLSNEQGHKAIMNRLGARPILDLDLRLGEGTGAALAMQVVEASVKLYNEMATFSSASVSGKSV</sequence>
<accession>B4S893</accession>
<gene>
    <name evidence="1" type="primary">cobT</name>
    <name type="ordered locus">Paes_1254</name>
</gene>